<sequence length="361" mass="40337">MLQIKEQLKQLTPYQPGKPIEEVKKEFNLDRVVKLASNENPYGCSEAAKEALQIEVQQMALYPDGYSAALRTKLASHLGVNETNIILGNGTDEVIQIISRSLLDPASNTVMANPTFSQYKHNAVIEGAEVREVGLLENGCHDLDAMLKAIDEQTKVVWVCSPNNPTGTYESGRNLIRFLEKVPEHVLAVVDEAYYEYVTAEDYPETIPLLERFPNLMILRTFSKAYGLASLRVGYGIASEQLIQAIEPARQPFNTNRLGQAAALAALGDQAFIHDCVRKNNEGLKQYYDFCDEHGLNYYPSQTNFVLIDFKRDADELFSELLKKGYIVRSGNALGFPTFLRISVGTKEQNEGFLKTLAGML</sequence>
<gene>
    <name evidence="1" type="primary">hisC</name>
    <name type="ordered locus">BLi02397</name>
    <name type="ordered locus">BL02769</name>
</gene>
<name>HIS8_BACLD</name>
<dbReference type="EC" id="2.6.1.9" evidence="1"/>
<dbReference type="EMBL" id="AE017333">
    <property type="protein sequence ID" value="AAU41277.1"/>
    <property type="molecule type" value="Genomic_DNA"/>
</dbReference>
<dbReference type="EMBL" id="CP000002">
    <property type="protein sequence ID" value="AAU23923.1"/>
    <property type="status" value="ALT_INIT"/>
    <property type="molecule type" value="Genomic_DNA"/>
</dbReference>
<dbReference type="SMR" id="Q65I37"/>
<dbReference type="STRING" id="279010.BL02769"/>
<dbReference type="KEGG" id="bld:BLi02397"/>
<dbReference type="KEGG" id="bli:BL02769"/>
<dbReference type="eggNOG" id="COG0079">
    <property type="taxonomic scope" value="Bacteria"/>
</dbReference>
<dbReference type="HOGENOM" id="CLU_017584_3_3_9"/>
<dbReference type="UniPathway" id="UPA00031">
    <property type="reaction ID" value="UER00012"/>
</dbReference>
<dbReference type="Proteomes" id="UP000000606">
    <property type="component" value="Chromosome"/>
</dbReference>
<dbReference type="GO" id="GO:0004400">
    <property type="term" value="F:histidinol-phosphate transaminase activity"/>
    <property type="evidence" value="ECO:0007669"/>
    <property type="project" value="UniProtKB-UniRule"/>
</dbReference>
<dbReference type="GO" id="GO:0030170">
    <property type="term" value="F:pyridoxal phosphate binding"/>
    <property type="evidence" value="ECO:0007669"/>
    <property type="project" value="InterPro"/>
</dbReference>
<dbReference type="GO" id="GO:0000105">
    <property type="term" value="P:L-histidine biosynthetic process"/>
    <property type="evidence" value="ECO:0007669"/>
    <property type="project" value="UniProtKB-UniRule"/>
</dbReference>
<dbReference type="CDD" id="cd00609">
    <property type="entry name" value="AAT_like"/>
    <property type="match status" value="1"/>
</dbReference>
<dbReference type="Gene3D" id="3.90.1150.10">
    <property type="entry name" value="Aspartate Aminotransferase, domain 1"/>
    <property type="match status" value="1"/>
</dbReference>
<dbReference type="Gene3D" id="3.40.640.10">
    <property type="entry name" value="Type I PLP-dependent aspartate aminotransferase-like (Major domain)"/>
    <property type="match status" value="1"/>
</dbReference>
<dbReference type="HAMAP" id="MF_01023">
    <property type="entry name" value="HisC_aminotrans_2"/>
    <property type="match status" value="1"/>
</dbReference>
<dbReference type="InterPro" id="IPR001917">
    <property type="entry name" value="Aminotrans_II_pyridoxalP_BS"/>
</dbReference>
<dbReference type="InterPro" id="IPR004839">
    <property type="entry name" value="Aminotransferase_I/II_large"/>
</dbReference>
<dbReference type="InterPro" id="IPR005861">
    <property type="entry name" value="HisP_aminotrans"/>
</dbReference>
<dbReference type="InterPro" id="IPR050106">
    <property type="entry name" value="HistidinolP_aminotransfase"/>
</dbReference>
<dbReference type="InterPro" id="IPR015424">
    <property type="entry name" value="PyrdxlP-dep_Trfase"/>
</dbReference>
<dbReference type="InterPro" id="IPR015421">
    <property type="entry name" value="PyrdxlP-dep_Trfase_major"/>
</dbReference>
<dbReference type="InterPro" id="IPR015422">
    <property type="entry name" value="PyrdxlP-dep_Trfase_small"/>
</dbReference>
<dbReference type="NCBIfam" id="TIGR01141">
    <property type="entry name" value="hisC"/>
    <property type="match status" value="1"/>
</dbReference>
<dbReference type="PANTHER" id="PTHR43643:SF3">
    <property type="entry name" value="HISTIDINOL-PHOSPHATE AMINOTRANSFERASE"/>
    <property type="match status" value="1"/>
</dbReference>
<dbReference type="PANTHER" id="PTHR43643">
    <property type="entry name" value="HISTIDINOL-PHOSPHATE AMINOTRANSFERASE 2"/>
    <property type="match status" value="1"/>
</dbReference>
<dbReference type="Pfam" id="PF00155">
    <property type="entry name" value="Aminotran_1_2"/>
    <property type="match status" value="1"/>
</dbReference>
<dbReference type="SUPFAM" id="SSF53383">
    <property type="entry name" value="PLP-dependent transferases"/>
    <property type="match status" value="1"/>
</dbReference>
<dbReference type="PROSITE" id="PS00599">
    <property type="entry name" value="AA_TRANSFER_CLASS_2"/>
    <property type="match status" value="1"/>
</dbReference>
<feature type="chain" id="PRO_0000153307" description="Histidinol-phosphate aminotransferase">
    <location>
        <begin position="1"/>
        <end position="361"/>
    </location>
</feature>
<feature type="modified residue" description="N6-(pyridoxal phosphate)lysine" evidence="1">
    <location>
        <position position="224"/>
    </location>
</feature>
<comment type="catalytic activity">
    <reaction evidence="1">
        <text>L-histidinol phosphate + 2-oxoglutarate = 3-(imidazol-4-yl)-2-oxopropyl phosphate + L-glutamate</text>
        <dbReference type="Rhea" id="RHEA:23744"/>
        <dbReference type="ChEBI" id="CHEBI:16810"/>
        <dbReference type="ChEBI" id="CHEBI:29985"/>
        <dbReference type="ChEBI" id="CHEBI:57766"/>
        <dbReference type="ChEBI" id="CHEBI:57980"/>
        <dbReference type="EC" id="2.6.1.9"/>
    </reaction>
</comment>
<comment type="cofactor">
    <cofactor evidence="1">
        <name>pyridoxal 5'-phosphate</name>
        <dbReference type="ChEBI" id="CHEBI:597326"/>
    </cofactor>
</comment>
<comment type="pathway">
    <text evidence="1">Amino-acid biosynthesis; L-histidine biosynthesis; L-histidine from 5-phospho-alpha-D-ribose 1-diphosphate: step 7/9.</text>
</comment>
<comment type="subunit">
    <text evidence="1">Homodimer.</text>
</comment>
<comment type="similarity">
    <text evidence="1">Belongs to the class-II pyridoxal-phosphate-dependent aminotransferase family. Histidinol-phosphate aminotransferase subfamily.</text>
</comment>
<comment type="sequence caution" evidence="2">
    <conflict type="erroneous initiation">
        <sequence resource="EMBL-CDS" id="AAU23923"/>
    </conflict>
</comment>
<protein>
    <recommendedName>
        <fullName evidence="1">Histidinol-phosphate aminotransferase</fullName>
        <ecNumber evidence="1">2.6.1.9</ecNumber>
    </recommendedName>
    <alternativeName>
        <fullName evidence="1">Imidazole acetol-phosphate transaminase</fullName>
    </alternativeName>
</protein>
<evidence type="ECO:0000255" key="1">
    <source>
        <dbReference type="HAMAP-Rule" id="MF_01023"/>
    </source>
</evidence>
<evidence type="ECO:0000305" key="2"/>
<keyword id="KW-0028">Amino-acid biosynthesis</keyword>
<keyword id="KW-0032">Aminotransferase</keyword>
<keyword id="KW-0368">Histidine biosynthesis</keyword>
<keyword id="KW-0663">Pyridoxal phosphate</keyword>
<keyword id="KW-1185">Reference proteome</keyword>
<keyword id="KW-0808">Transferase</keyword>
<accession>Q65I37</accession>
<accession>Q62TI6</accession>
<reference key="1">
    <citation type="journal article" date="2004" name="J. Mol. Microbiol. Biotechnol.">
        <title>The complete genome sequence of Bacillus licheniformis DSM13, an organism with great industrial potential.</title>
        <authorList>
            <person name="Veith B."/>
            <person name="Herzberg C."/>
            <person name="Steckel S."/>
            <person name="Feesche J."/>
            <person name="Maurer K.H."/>
            <person name="Ehrenreich P."/>
            <person name="Baeumer S."/>
            <person name="Henne A."/>
            <person name="Liesegang H."/>
            <person name="Merkl R."/>
            <person name="Ehrenreich A."/>
            <person name="Gottschalk G."/>
        </authorList>
    </citation>
    <scope>NUCLEOTIDE SEQUENCE [LARGE SCALE GENOMIC DNA]</scope>
    <source>
        <strain>ATCC 14580 / DSM 13 / JCM 2505 / CCUG 7422 / NBRC 12200 / NCIMB 9375 / NCTC 10341 / NRRL NRS-1264 / Gibson 46</strain>
    </source>
</reference>
<reference key="2">
    <citation type="journal article" date="2004" name="Genome Biol.">
        <title>Complete genome sequence of the industrial bacterium Bacillus licheniformis and comparisons with closely related Bacillus species.</title>
        <authorList>
            <person name="Rey M.W."/>
            <person name="Ramaiya P."/>
            <person name="Nelson B.A."/>
            <person name="Brody-Karpin S.D."/>
            <person name="Zaretsky E.J."/>
            <person name="Tang M."/>
            <person name="Lopez de Leon A."/>
            <person name="Xiang H."/>
            <person name="Gusti V."/>
            <person name="Clausen I.G."/>
            <person name="Olsen P.B."/>
            <person name="Rasmussen M.D."/>
            <person name="Andersen J.T."/>
            <person name="Joergensen P.L."/>
            <person name="Larsen T.S."/>
            <person name="Sorokin A."/>
            <person name="Bolotin A."/>
            <person name="Lapidus A."/>
            <person name="Galleron N."/>
            <person name="Ehrlich S.D."/>
            <person name="Berka R.M."/>
        </authorList>
    </citation>
    <scope>NUCLEOTIDE SEQUENCE [LARGE SCALE GENOMIC DNA]</scope>
    <source>
        <strain>ATCC 14580 / DSM 13 / JCM 2505 / CCUG 7422 / NBRC 12200 / NCIMB 9375 / NCTC 10341 / NRRL NRS-1264 / Gibson 46</strain>
    </source>
</reference>
<organism>
    <name type="scientific">Bacillus licheniformis (strain ATCC 14580 / DSM 13 / JCM 2505 / CCUG 7422 / NBRC 12200 / NCIMB 9375 / NCTC 10341 / NRRL NRS-1264 / Gibson 46)</name>
    <dbReference type="NCBI Taxonomy" id="279010"/>
    <lineage>
        <taxon>Bacteria</taxon>
        <taxon>Bacillati</taxon>
        <taxon>Bacillota</taxon>
        <taxon>Bacilli</taxon>
        <taxon>Bacillales</taxon>
        <taxon>Bacillaceae</taxon>
        <taxon>Bacillus</taxon>
    </lineage>
</organism>
<proteinExistence type="inferred from homology"/>